<organism>
    <name type="scientific">Homo sapiens</name>
    <name type="common">Human</name>
    <dbReference type="NCBI Taxonomy" id="9606"/>
    <lineage>
        <taxon>Eukaryota</taxon>
        <taxon>Metazoa</taxon>
        <taxon>Chordata</taxon>
        <taxon>Craniata</taxon>
        <taxon>Vertebrata</taxon>
        <taxon>Euteleostomi</taxon>
        <taxon>Mammalia</taxon>
        <taxon>Eutheria</taxon>
        <taxon>Euarchontoglires</taxon>
        <taxon>Primates</taxon>
        <taxon>Haplorrhini</taxon>
        <taxon>Catarrhini</taxon>
        <taxon>Hominidae</taxon>
        <taxon>Homo</taxon>
    </lineage>
</organism>
<evidence type="ECO:0000250" key="1"/>
<evidence type="ECO:0000250" key="2">
    <source>
        <dbReference type="UniProtKB" id="Q69ZF7"/>
    </source>
</evidence>
<evidence type="ECO:0000255" key="3"/>
<evidence type="ECO:0000255" key="4">
    <source>
        <dbReference type="PROSITE-ProRule" id="PRU00703"/>
    </source>
</evidence>
<evidence type="ECO:0000255" key="5">
    <source>
        <dbReference type="PROSITE-ProRule" id="PRU01193"/>
    </source>
</evidence>
<evidence type="ECO:0000269" key="6">
    <source>
    </source>
</evidence>
<evidence type="ECO:0000269" key="7">
    <source>
    </source>
</evidence>
<evidence type="ECO:0000269" key="8">
    <source>
    </source>
</evidence>
<evidence type="ECO:0000269" key="9">
    <source>
    </source>
</evidence>
<evidence type="ECO:0000269" key="10">
    <source>
    </source>
</evidence>
<evidence type="ECO:0000269" key="11">
    <source>
    </source>
</evidence>
<evidence type="ECO:0000269" key="12">
    <source>
    </source>
</evidence>
<evidence type="ECO:0000303" key="13">
    <source>
    </source>
</evidence>
<evidence type="ECO:0000305" key="14"/>
<evidence type="ECO:0007744" key="15">
    <source>
    </source>
</evidence>
<proteinExistence type="evidence at protein level"/>
<protein>
    <recommendedName>
        <fullName>Metal transporter CNNM4</fullName>
    </recommendedName>
    <alternativeName>
        <fullName>Ancient conserved domain-containing protein 4</fullName>
    </alternativeName>
    <alternativeName>
        <fullName>Cyclin-M4</fullName>
    </alternativeName>
</protein>
<comment type="function">
    <text evidence="1 10 11">Probable metal transporter. The interaction with the metal ion chaperone COX11 suggests that it may play a role in sensory neuron functions (By similarity). May play a role in biomineralization and retinal function.</text>
</comment>
<comment type="subunit">
    <text evidence="8">Interacts with COX11.</text>
</comment>
<comment type="subcellular location">
    <subcellularLocation>
        <location evidence="12">Cell membrane</location>
        <topology evidence="12">Multi-pass membrane protein</topology>
    </subcellularLocation>
</comment>
<comment type="alternative products">
    <event type="alternative splicing"/>
    <isoform>
        <id>Q6P4Q7-1</id>
        <name>1</name>
        <sequence type="displayed"/>
    </isoform>
    <isoform>
        <id>Q6P4Q7-2</id>
        <name>2</name>
        <sequence type="described" ref="VSP_054271 VSP_054272"/>
    </isoform>
</comment>
<comment type="tissue specificity">
    <text evidence="6">Widely expressed. Highly expressed in heart.</text>
</comment>
<comment type="disease" evidence="10 11">
    <disease id="DI-00603">
        <name>Jalili syndrome</name>
        <acronym>JALIS</acronym>
        <description>A syndrome characterized by the association of cone-rod dystrophy and amelogenesis imperfecta.</description>
        <dbReference type="MIM" id="217080"/>
    </disease>
    <text>The disease is caused by variants affecting the gene represented in this entry.</text>
</comment>
<comment type="miscellaneous">
    <text>Shares weak sequence similarity with the cyclin family, explaining its name. However, it has no cyclin-like function in vivo.</text>
</comment>
<comment type="similarity">
    <text evidence="14">Belongs to the ACDP family.</text>
</comment>
<comment type="sequence caution" evidence="14">
    <conflict type="frameshift">
        <sequence resource="EMBL-CDS" id="AAF86370"/>
    </conflict>
</comment>
<comment type="sequence caution" evidence="14">
    <conflict type="erroneous initiation">
        <sequence resource="EMBL-CDS" id="AAY14963"/>
    </conflict>
    <text>Truncated N-terminus.</text>
</comment>
<comment type="sequence caution" evidence="14">
    <conflict type="erroneous initiation">
        <sequence resource="EMBL-CDS" id="BAB14266"/>
    </conflict>
    <text>Truncated N-terminus.</text>
</comment>
<accession>Q6P4Q7</accession>
<accession>B7Z1U0</accession>
<accession>C7SQM3</accession>
<accession>C7SQM4</accession>
<accession>C7SQM5</accession>
<accession>Q53RE5</accession>
<accession>Q9H9G3</accession>
<accession>Q9HCI0</accession>
<accession>Q9NRN1</accession>
<gene>
    <name type="primary">CNNM4</name>
    <name type="synonym">ACDP4</name>
    <name type="synonym">KIAA1592</name>
</gene>
<keyword id="KW-0002">3D-structure</keyword>
<keyword id="KW-0025">Alternative splicing</keyword>
<keyword id="KW-0986">Amelogenesis imperfecta</keyword>
<keyword id="KW-0091">Biomineralization</keyword>
<keyword id="KW-0129">CBS domain</keyword>
<keyword id="KW-1003">Cell membrane</keyword>
<keyword id="KW-0182">Cone-rod dystrophy</keyword>
<keyword id="KW-0225">Disease variant</keyword>
<keyword id="KW-0325">Glycoprotein</keyword>
<keyword id="KW-0406">Ion transport</keyword>
<keyword id="KW-0472">Membrane</keyword>
<keyword id="KW-0597">Phosphoprotein</keyword>
<keyword id="KW-1267">Proteomics identification</keyword>
<keyword id="KW-1185">Reference proteome</keyword>
<keyword id="KW-0677">Repeat</keyword>
<keyword id="KW-0716">Sensory transduction</keyword>
<keyword id="KW-0812">Transmembrane</keyword>
<keyword id="KW-1133">Transmembrane helix</keyword>
<keyword id="KW-0813">Transport</keyword>
<keyword id="KW-0844">Vision</keyword>
<name>CNNM4_HUMAN</name>
<sequence>MAPVGGGGRPVGGPARGRLLLAAPVLLVLLWALGARGQGSPQQGTIVGMRLASCNKSCGTNPDGIIFVSEGSTVNLRLYGYSLGNISSNLISFTEVDDAETLHKSTSCLELTKDLVVQQLVNVSRGNTSGVLVVLTKFLRRSESMKLYALCTRAQPDGPWLKWTDKDSLLFMVEEPGRFLPLWLHILLITVLLVLSGIFSGLNLGLMALDPMELRIVQNCGTEKERRYARKIEPIRRKGNYLLCSLLLGNVLVNTSLTILLDNLIGSGLMAVASSTIGIVIFGEILPQALCSRHGLAVGANTILLTKFFMLLTFPLSFPISKLLDFFLGQEIRTVYNREKLMEMLKVTEPYNDLVKEELNMIQGALELRTKTVEDIMTQLQDCFMIRSDAILDFNTMSEIMESGYTRIPVFEDEQSNIVDILYVKDLAFVDPDDCTPLKTITRFYNHPVHFVFHDTKLDAMLEEFKKGKSHLAIVQKVNNEGEGDPFYEVLGLVTLEDVIEEIIKSEILDESDMYTDNRSRKRVSEKNKRDFSAFKDADNELKVKISPQLLLAAHRFLATEVSQFSPSLISEKILLRLLKYPDVIQELKFDEHNKYYARHYLYTRNKPADYFILILQGKVEVEAGKENMKFETGAFSYYGTMALTSVPSDRSPAHPTPLSRSASLSYPDRTDVSTAATLAGSSNQFGSSVLGQYISDFSVRALVDLQYIKITRQQYQNGLLASRMENSPQFPIDGCTTHMENLAEKSELPVVDETTTLLNERNSLLHKASHENAI</sequence>
<dbReference type="EMBL" id="AK022833">
    <property type="protein sequence ID" value="BAB14266.1"/>
    <property type="status" value="ALT_INIT"/>
    <property type="molecule type" value="mRNA"/>
</dbReference>
<dbReference type="EMBL" id="AK293915">
    <property type="protein sequence ID" value="BAH11626.1"/>
    <property type="molecule type" value="mRNA"/>
</dbReference>
<dbReference type="EMBL" id="AC092636">
    <property type="protein sequence ID" value="AAY14963.1"/>
    <property type="status" value="ALT_INIT"/>
    <property type="molecule type" value="Genomic_DNA"/>
</dbReference>
<dbReference type="EMBL" id="BC063295">
    <property type="protein sequence ID" value="AAH63295.2"/>
    <property type="molecule type" value="mRNA"/>
</dbReference>
<dbReference type="EMBL" id="FJ619522">
    <property type="protein sequence ID" value="ACV32670.1"/>
    <property type="molecule type" value="Genomic_DNA"/>
</dbReference>
<dbReference type="EMBL" id="FJ619523">
    <property type="protein sequence ID" value="ACV32671.1"/>
    <property type="molecule type" value="Genomic_DNA"/>
</dbReference>
<dbReference type="EMBL" id="FJ619524">
    <property type="protein sequence ID" value="ACV32672.1"/>
    <property type="molecule type" value="Genomic_DNA"/>
</dbReference>
<dbReference type="EMBL" id="AF202777">
    <property type="protein sequence ID" value="AAF86370.1"/>
    <property type="status" value="ALT_FRAME"/>
    <property type="molecule type" value="mRNA"/>
</dbReference>
<dbReference type="EMBL" id="AB046812">
    <property type="protein sequence ID" value="BAB13418.1"/>
    <property type="molecule type" value="mRNA"/>
</dbReference>
<dbReference type="CCDS" id="CCDS2024.2">
    <molecule id="Q6P4Q7-1"/>
</dbReference>
<dbReference type="RefSeq" id="NP_064569.3">
    <molecule id="Q6P4Q7-1"/>
    <property type="nucleotide sequence ID" value="NM_020184.3"/>
</dbReference>
<dbReference type="PDB" id="6G52">
    <property type="method" value="X-ray"/>
    <property type="resolution" value="3.69 A"/>
    <property type="chains" value="A/B/C/D/E/F/G/H/I=545-730"/>
</dbReference>
<dbReference type="PDB" id="6RS2">
    <property type="method" value="X-ray"/>
    <property type="resolution" value="3.69 A"/>
    <property type="chains" value="A/B/C/D=359-511"/>
</dbReference>
<dbReference type="PDBsum" id="6G52"/>
<dbReference type="PDBsum" id="6RS2"/>
<dbReference type="SASBDB" id="Q6P4Q7"/>
<dbReference type="SMR" id="Q6P4Q7"/>
<dbReference type="BioGRID" id="117711">
    <property type="interactions" value="106"/>
</dbReference>
<dbReference type="FunCoup" id="Q6P4Q7">
    <property type="interactions" value="255"/>
</dbReference>
<dbReference type="IntAct" id="Q6P4Q7">
    <property type="interactions" value="44"/>
</dbReference>
<dbReference type="MINT" id="Q6P4Q7"/>
<dbReference type="STRING" id="9606.ENSP00000366275"/>
<dbReference type="TCDB" id="1.A.112.1.4">
    <property type="family name" value="the cyclin m mg2+ exporter (cnnm) family"/>
</dbReference>
<dbReference type="GlyConnect" id="1504">
    <property type="glycosylation" value="6 N-Linked glycans (2 sites)"/>
</dbReference>
<dbReference type="GlyCosmos" id="Q6P4Q7">
    <property type="glycosylation" value="3 sites, 6 glycans"/>
</dbReference>
<dbReference type="GlyGen" id="Q6P4Q7">
    <property type="glycosylation" value="5 sites, 13 N-linked glycans (4 sites)"/>
</dbReference>
<dbReference type="iPTMnet" id="Q6P4Q7"/>
<dbReference type="PhosphoSitePlus" id="Q6P4Q7"/>
<dbReference type="SwissPalm" id="Q6P4Q7"/>
<dbReference type="BioMuta" id="CNNM4"/>
<dbReference type="DMDM" id="224471892"/>
<dbReference type="jPOST" id="Q6P4Q7"/>
<dbReference type="MassIVE" id="Q6P4Q7"/>
<dbReference type="PaxDb" id="9606-ENSP00000366275"/>
<dbReference type="PeptideAtlas" id="Q6P4Q7"/>
<dbReference type="ProteomicsDB" id="6371"/>
<dbReference type="ProteomicsDB" id="66982">
    <molecule id="Q6P4Q7-1"/>
</dbReference>
<dbReference type="Pumba" id="Q6P4Q7"/>
<dbReference type="Antibodypedia" id="17482">
    <property type="antibodies" value="153 antibodies from 22 providers"/>
</dbReference>
<dbReference type="DNASU" id="26504"/>
<dbReference type="Ensembl" id="ENST00000377075.3">
    <molecule id="Q6P4Q7-1"/>
    <property type="protein sequence ID" value="ENSP00000366275.2"/>
    <property type="gene ID" value="ENSG00000158158.12"/>
</dbReference>
<dbReference type="GeneID" id="26504"/>
<dbReference type="KEGG" id="hsa:26504"/>
<dbReference type="MANE-Select" id="ENST00000377075.3">
    <property type="protein sequence ID" value="ENSP00000366275.2"/>
    <property type="RefSeq nucleotide sequence ID" value="NM_020184.4"/>
    <property type="RefSeq protein sequence ID" value="NP_064569.3"/>
</dbReference>
<dbReference type="UCSC" id="uc002swx.3">
    <molecule id="Q6P4Q7-1"/>
    <property type="organism name" value="human"/>
</dbReference>
<dbReference type="AGR" id="HGNC:105"/>
<dbReference type="CTD" id="26504"/>
<dbReference type="DisGeNET" id="26504"/>
<dbReference type="GeneCards" id="CNNM4"/>
<dbReference type="HGNC" id="HGNC:105">
    <property type="gene designation" value="CNNM4"/>
</dbReference>
<dbReference type="HPA" id="ENSG00000158158">
    <property type="expression patterns" value="Tissue enhanced (retina)"/>
</dbReference>
<dbReference type="MalaCards" id="CNNM4"/>
<dbReference type="MIM" id="217080">
    <property type="type" value="phenotype"/>
</dbReference>
<dbReference type="MIM" id="607805">
    <property type="type" value="gene"/>
</dbReference>
<dbReference type="neXtProt" id="NX_Q6P4Q7"/>
<dbReference type="OpenTargets" id="ENSG00000158158"/>
<dbReference type="Orphanet" id="1873">
    <property type="disease" value="Jalili syndrome"/>
</dbReference>
<dbReference type="PharmGKB" id="PA26671"/>
<dbReference type="VEuPathDB" id="HostDB:ENSG00000158158"/>
<dbReference type="eggNOG" id="KOG2118">
    <property type="taxonomic scope" value="Eukaryota"/>
</dbReference>
<dbReference type="GeneTree" id="ENSGT00940000156317"/>
<dbReference type="HOGENOM" id="CLU_011310_1_1_1"/>
<dbReference type="InParanoid" id="Q6P4Q7"/>
<dbReference type="OMA" id="STEEGRW"/>
<dbReference type="OrthoDB" id="5353557at2759"/>
<dbReference type="PAN-GO" id="Q6P4Q7">
    <property type="GO annotations" value="6 GO annotations based on evolutionary models"/>
</dbReference>
<dbReference type="PhylomeDB" id="Q6P4Q7"/>
<dbReference type="TreeFam" id="TF101012"/>
<dbReference type="BRENDA" id="7.2.2.14">
    <property type="organism ID" value="2681"/>
</dbReference>
<dbReference type="PathwayCommons" id="Q6P4Q7"/>
<dbReference type="SignaLink" id="Q6P4Q7"/>
<dbReference type="BioGRID-ORCS" id="26504">
    <property type="hits" value="18 hits in 1163 CRISPR screens"/>
</dbReference>
<dbReference type="ChiTaRS" id="CNNM4">
    <property type="organism name" value="human"/>
</dbReference>
<dbReference type="GenomeRNAi" id="26504"/>
<dbReference type="Pharos" id="Q6P4Q7">
    <property type="development level" value="Tbio"/>
</dbReference>
<dbReference type="PRO" id="PR:Q6P4Q7"/>
<dbReference type="Proteomes" id="UP000005640">
    <property type="component" value="Chromosome 2"/>
</dbReference>
<dbReference type="RNAct" id="Q6P4Q7">
    <property type="molecule type" value="protein"/>
</dbReference>
<dbReference type="Bgee" id="ENSG00000158158">
    <property type="expression patterns" value="Expressed in mucosa of transverse colon and 115 other cell types or tissues"/>
</dbReference>
<dbReference type="GO" id="GO:0016323">
    <property type="term" value="C:basolateral plasma membrane"/>
    <property type="evidence" value="ECO:0007669"/>
    <property type="project" value="Ensembl"/>
</dbReference>
<dbReference type="GO" id="GO:0005886">
    <property type="term" value="C:plasma membrane"/>
    <property type="evidence" value="ECO:0000318"/>
    <property type="project" value="GO_Central"/>
</dbReference>
<dbReference type="GO" id="GO:0032991">
    <property type="term" value="C:protein-containing complex"/>
    <property type="evidence" value="ECO:0000314"/>
    <property type="project" value="UniProtKB"/>
</dbReference>
<dbReference type="GO" id="GO:0015095">
    <property type="term" value="F:magnesium ion transmembrane transporter activity"/>
    <property type="evidence" value="ECO:0000318"/>
    <property type="project" value="GO_Central"/>
</dbReference>
<dbReference type="GO" id="GO:0015081">
    <property type="term" value="F:sodium ion transmembrane transporter activity"/>
    <property type="evidence" value="ECO:0000318"/>
    <property type="project" value="GO_Central"/>
</dbReference>
<dbReference type="GO" id="GO:0070166">
    <property type="term" value="P:enamel mineralization"/>
    <property type="evidence" value="ECO:0007669"/>
    <property type="project" value="Ensembl"/>
</dbReference>
<dbReference type="GO" id="GO:0030003">
    <property type="term" value="P:intracellular monoatomic cation homeostasis"/>
    <property type="evidence" value="ECO:0000314"/>
    <property type="project" value="UniProtKB"/>
</dbReference>
<dbReference type="GO" id="GO:0010960">
    <property type="term" value="P:magnesium ion homeostasis"/>
    <property type="evidence" value="ECO:0000318"/>
    <property type="project" value="GO_Central"/>
</dbReference>
<dbReference type="GO" id="GO:0015693">
    <property type="term" value="P:magnesium ion transport"/>
    <property type="evidence" value="ECO:0000318"/>
    <property type="project" value="GO_Central"/>
</dbReference>
<dbReference type="GO" id="GO:0007601">
    <property type="term" value="P:visual perception"/>
    <property type="evidence" value="ECO:0007669"/>
    <property type="project" value="UniProtKB-KW"/>
</dbReference>
<dbReference type="CDD" id="cd04590">
    <property type="entry name" value="CBS_pair_CorC_HlyC_assoc"/>
    <property type="match status" value="1"/>
</dbReference>
<dbReference type="FunFam" id="3.10.580.10:FF:000001">
    <property type="entry name" value="Putative metal transporter CNNM3 isoform 2"/>
    <property type="match status" value="1"/>
</dbReference>
<dbReference type="Gene3D" id="3.10.580.10">
    <property type="entry name" value="CBS-domain"/>
    <property type="match status" value="1"/>
</dbReference>
<dbReference type="Gene3D" id="2.60.120.10">
    <property type="entry name" value="Jelly Rolls"/>
    <property type="match status" value="1"/>
</dbReference>
<dbReference type="InterPro" id="IPR045095">
    <property type="entry name" value="ACDP"/>
</dbReference>
<dbReference type="InterPro" id="IPR000644">
    <property type="entry name" value="CBS_dom"/>
</dbReference>
<dbReference type="InterPro" id="IPR046342">
    <property type="entry name" value="CBS_dom_sf"/>
</dbReference>
<dbReference type="InterPro" id="IPR000595">
    <property type="entry name" value="cNMP-bd_dom"/>
</dbReference>
<dbReference type="InterPro" id="IPR018490">
    <property type="entry name" value="cNMP-bd_dom_sf"/>
</dbReference>
<dbReference type="InterPro" id="IPR002550">
    <property type="entry name" value="CNNM"/>
</dbReference>
<dbReference type="InterPro" id="IPR044751">
    <property type="entry name" value="Ion_transp-like_CBS"/>
</dbReference>
<dbReference type="InterPro" id="IPR014710">
    <property type="entry name" value="RmlC-like_jellyroll"/>
</dbReference>
<dbReference type="PANTHER" id="PTHR12064">
    <property type="entry name" value="METAL TRANSPORTER CNNM"/>
    <property type="match status" value="1"/>
</dbReference>
<dbReference type="PANTHER" id="PTHR12064:SF26">
    <property type="entry name" value="METAL TRANSPORTER CNNM4"/>
    <property type="match status" value="1"/>
</dbReference>
<dbReference type="Pfam" id="PF00571">
    <property type="entry name" value="CBS"/>
    <property type="match status" value="1"/>
</dbReference>
<dbReference type="Pfam" id="PF01595">
    <property type="entry name" value="CNNM"/>
    <property type="match status" value="1"/>
</dbReference>
<dbReference type="Pfam" id="PF25511">
    <property type="entry name" value="Ig_CNNM4_N"/>
    <property type="match status" value="1"/>
</dbReference>
<dbReference type="SUPFAM" id="SSF51206">
    <property type="entry name" value="cAMP-binding domain-like"/>
    <property type="match status" value="1"/>
</dbReference>
<dbReference type="SUPFAM" id="SSF54631">
    <property type="entry name" value="CBS-domain pair"/>
    <property type="match status" value="1"/>
</dbReference>
<dbReference type="PROSITE" id="PS51371">
    <property type="entry name" value="CBS"/>
    <property type="match status" value="2"/>
</dbReference>
<dbReference type="PROSITE" id="PS50042">
    <property type="entry name" value="CNMP_BINDING_3"/>
    <property type="match status" value="1"/>
</dbReference>
<dbReference type="PROSITE" id="PS51846">
    <property type="entry name" value="CNNM"/>
    <property type="match status" value="1"/>
</dbReference>
<feature type="chain" id="PRO_0000295765" description="Metal transporter CNNM4">
    <location>
        <begin position="1"/>
        <end position="775"/>
    </location>
</feature>
<feature type="topological domain" description="Extracellular" evidence="3">
    <location>
        <begin position="1"/>
        <end position="178"/>
    </location>
</feature>
<feature type="transmembrane region" description="Helical" evidence="3">
    <location>
        <begin position="179"/>
        <end position="199"/>
    </location>
</feature>
<feature type="topological domain" description="Cytoplasmic" evidence="3">
    <location>
        <begin position="200"/>
        <end position="240"/>
    </location>
</feature>
<feature type="intramembrane region" description="Helical" evidence="3">
    <location>
        <begin position="241"/>
        <end position="261"/>
    </location>
</feature>
<feature type="topological domain" description="Cytoplasmic" evidence="3">
    <location>
        <begin position="262"/>
        <end position="264"/>
    </location>
</feature>
<feature type="transmembrane region" description="Helical" evidence="3">
    <location>
        <begin position="265"/>
        <end position="285"/>
    </location>
</feature>
<feature type="topological domain" description="Extracellular" evidence="3">
    <location>
        <begin position="286"/>
        <end position="293"/>
    </location>
</feature>
<feature type="transmembrane region" description="Helical" evidence="3">
    <location>
        <begin position="294"/>
        <end position="316"/>
    </location>
</feature>
<feature type="topological domain" description="Cytoplasmic" evidence="3">
    <location>
        <begin position="317"/>
        <end position="775"/>
    </location>
</feature>
<feature type="domain" description="CNNM transmembrane" evidence="5">
    <location>
        <begin position="178"/>
        <end position="358"/>
    </location>
</feature>
<feature type="domain" description="CBS 1" evidence="4">
    <location>
        <begin position="377"/>
        <end position="438"/>
    </location>
</feature>
<feature type="domain" description="CBS 2" evidence="4">
    <location>
        <begin position="445"/>
        <end position="511"/>
    </location>
</feature>
<feature type="modified residue" description="Phosphoserine" evidence="15">
    <location>
        <position position="660"/>
    </location>
</feature>
<feature type="modified residue" description="Phosphoserine" evidence="15">
    <location>
        <position position="664"/>
    </location>
</feature>
<feature type="modified residue" description="Phosphoserine" evidence="2">
    <location>
        <position position="770"/>
    </location>
</feature>
<feature type="glycosylation site" description="N-linked (GlcNAc...) asparagine" evidence="3">
    <location>
        <position position="85"/>
    </location>
</feature>
<feature type="glycosylation site" description="N-linked (GlcNAc...) asparagine" evidence="3">
    <location>
        <position position="122"/>
    </location>
</feature>
<feature type="splice variant" id="VSP_054271" description="In isoform 2." evidence="13">
    <location>
        <begin position="1"/>
        <end position="513"/>
    </location>
</feature>
<feature type="splice variant" id="VSP_054272" description="In isoform 2." evidence="13">
    <original>ITRQQYQNGLLASRMENSPQFPIDGCTTHMENLAEKSELPVVDETTTLLNERNSLLHKASHENAI</original>
    <variation>PQSWPCFSRPGDRVCLPAPPSMNSSLPHADHSAAVPERAAGFSHGEQPSVSHRRVHHPHGELGREV</variation>
    <location>
        <begin position="711"/>
        <end position="775"/>
    </location>
</feature>
<feature type="sequence variant" id="VAR_033365" description="In dbSNP:rs17855817." evidence="7">
    <original>G</original>
    <variation>R</variation>
    <location>
        <position position="126"/>
    </location>
</feature>
<feature type="sequence variant" id="VAR_035946" description="In a breast cancer sample; somatic mutation." evidence="9">
    <original>V</original>
    <variation>L</variation>
    <location>
        <position position="134"/>
    </location>
</feature>
<feature type="sequence variant" id="VAR_058319" description="In JALIS." evidence="10">
    <original>S</original>
    <variation>P</variation>
    <location>
        <position position="196"/>
    </location>
</feature>
<feature type="sequence variant" id="VAR_058320" description="In JALIS; dbSNP:rs79424354." evidence="10">
    <original>S</original>
    <variation>Y</variation>
    <location>
        <position position="200"/>
    </location>
</feature>
<feature type="sequence variant" id="VAR_058321" description="In JALIS; dbSNP:rs75267011." evidence="11">
    <original>R</original>
    <variation>Q</variation>
    <location>
        <position position="236"/>
    </location>
</feature>
<feature type="sequence variant" id="VAR_058322" description="In JALIS; dbSNP:rs74552543." evidence="10 11">
    <original>L</original>
    <variation>P</variation>
    <location>
        <position position="324"/>
    </location>
</feature>
<feature type="sequence conflict" description="In Ref. 5; AAF86370." evidence="14" ref="5">
    <original>T</original>
    <variation>I</variation>
    <location>
        <position position="302"/>
    </location>
</feature>
<reference key="1">
    <citation type="journal article" date="2004" name="Nat. Genet.">
        <title>Complete sequencing and characterization of 21,243 full-length human cDNAs.</title>
        <authorList>
            <person name="Ota T."/>
            <person name="Suzuki Y."/>
            <person name="Nishikawa T."/>
            <person name="Otsuki T."/>
            <person name="Sugiyama T."/>
            <person name="Irie R."/>
            <person name="Wakamatsu A."/>
            <person name="Hayashi K."/>
            <person name="Sato H."/>
            <person name="Nagai K."/>
            <person name="Kimura K."/>
            <person name="Makita H."/>
            <person name="Sekine M."/>
            <person name="Obayashi M."/>
            <person name="Nishi T."/>
            <person name="Shibahara T."/>
            <person name="Tanaka T."/>
            <person name="Ishii S."/>
            <person name="Yamamoto J."/>
            <person name="Saito K."/>
            <person name="Kawai Y."/>
            <person name="Isono Y."/>
            <person name="Nakamura Y."/>
            <person name="Nagahari K."/>
            <person name="Murakami K."/>
            <person name="Yasuda T."/>
            <person name="Iwayanagi T."/>
            <person name="Wagatsuma M."/>
            <person name="Shiratori A."/>
            <person name="Sudo H."/>
            <person name="Hosoiri T."/>
            <person name="Kaku Y."/>
            <person name="Kodaira H."/>
            <person name="Kondo H."/>
            <person name="Sugawara M."/>
            <person name="Takahashi M."/>
            <person name="Kanda K."/>
            <person name="Yokoi T."/>
            <person name="Furuya T."/>
            <person name="Kikkawa E."/>
            <person name="Omura Y."/>
            <person name="Abe K."/>
            <person name="Kamihara K."/>
            <person name="Katsuta N."/>
            <person name="Sato K."/>
            <person name="Tanikawa M."/>
            <person name="Yamazaki M."/>
            <person name="Ninomiya K."/>
            <person name="Ishibashi T."/>
            <person name="Yamashita H."/>
            <person name="Murakawa K."/>
            <person name="Fujimori K."/>
            <person name="Tanai H."/>
            <person name="Kimata M."/>
            <person name="Watanabe M."/>
            <person name="Hiraoka S."/>
            <person name="Chiba Y."/>
            <person name="Ishida S."/>
            <person name="Ono Y."/>
            <person name="Takiguchi S."/>
            <person name="Watanabe S."/>
            <person name="Yosida M."/>
            <person name="Hotuta T."/>
            <person name="Kusano J."/>
            <person name="Kanehori K."/>
            <person name="Takahashi-Fujii A."/>
            <person name="Hara H."/>
            <person name="Tanase T.-O."/>
            <person name="Nomura Y."/>
            <person name="Togiya S."/>
            <person name="Komai F."/>
            <person name="Hara R."/>
            <person name="Takeuchi K."/>
            <person name="Arita M."/>
            <person name="Imose N."/>
            <person name="Musashino K."/>
            <person name="Yuuki H."/>
            <person name="Oshima A."/>
            <person name="Sasaki N."/>
            <person name="Aotsuka S."/>
            <person name="Yoshikawa Y."/>
            <person name="Matsunawa H."/>
            <person name="Ichihara T."/>
            <person name="Shiohata N."/>
            <person name="Sano S."/>
            <person name="Moriya S."/>
            <person name="Momiyama H."/>
            <person name="Satoh N."/>
            <person name="Takami S."/>
            <person name="Terashima Y."/>
            <person name="Suzuki O."/>
            <person name="Nakagawa S."/>
            <person name="Senoh A."/>
            <person name="Mizoguchi H."/>
            <person name="Goto Y."/>
            <person name="Shimizu F."/>
            <person name="Wakebe H."/>
            <person name="Hishigaki H."/>
            <person name="Watanabe T."/>
            <person name="Sugiyama A."/>
            <person name="Takemoto M."/>
            <person name="Kawakami B."/>
            <person name="Yamazaki M."/>
            <person name="Watanabe K."/>
            <person name="Kumagai A."/>
            <person name="Itakura S."/>
            <person name="Fukuzumi Y."/>
            <person name="Fujimori Y."/>
            <person name="Komiyama M."/>
            <person name="Tashiro H."/>
            <person name="Tanigami A."/>
            <person name="Fujiwara T."/>
            <person name="Ono T."/>
            <person name="Yamada K."/>
            <person name="Fujii Y."/>
            <person name="Ozaki K."/>
            <person name="Hirao M."/>
            <person name="Ohmori Y."/>
            <person name="Kawabata A."/>
            <person name="Hikiji T."/>
            <person name="Kobatake N."/>
            <person name="Inagaki H."/>
            <person name="Ikema Y."/>
            <person name="Okamoto S."/>
            <person name="Okitani R."/>
            <person name="Kawakami T."/>
            <person name="Noguchi S."/>
            <person name="Itoh T."/>
            <person name="Shigeta K."/>
            <person name="Senba T."/>
            <person name="Matsumura K."/>
            <person name="Nakajima Y."/>
            <person name="Mizuno T."/>
            <person name="Morinaga M."/>
            <person name="Sasaki M."/>
            <person name="Togashi T."/>
            <person name="Oyama M."/>
            <person name="Hata H."/>
            <person name="Watanabe M."/>
            <person name="Komatsu T."/>
            <person name="Mizushima-Sugano J."/>
            <person name="Satoh T."/>
            <person name="Shirai Y."/>
            <person name="Takahashi Y."/>
            <person name="Nakagawa K."/>
            <person name="Okumura K."/>
            <person name="Nagase T."/>
            <person name="Nomura N."/>
            <person name="Kikuchi H."/>
            <person name="Masuho Y."/>
            <person name="Yamashita R."/>
            <person name="Nakai K."/>
            <person name="Yada T."/>
            <person name="Nakamura Y."/>
            <person name="Ohara O."/>
            <person name="Isogai T."/>
            <person name="Sugano S."/>
        </authorList>
    </citation>
    <scope>NUCLEOTIDE SEQUENCE [LARGE SCALE MRNA] (ISOFORM 2)</scope>
    <scope>NUCLEOTIDE SEQUENCE [LARGE SCALE MRNA] OF 570-775 (ISOFORM 1)</scope>
    <source>
        <tissue>Cerebellum</tissue>
        <tissue>Teratocarcinoma</tissue>
    </source>
</reference>
<reference key="2">
    <citation type="journal article" date="2005" name="Nature">
        <title>Generation and annotation of the DNA sequences of human chromosomes 2 and 4.</title>
        <authorList>
            <person name="Hillier L.W."/>
            <person name="Graves T.A."/>
            <person name="Fulton R.S."/>
            <person name="Fulton L.A."/>
            <person name="Pepin K.H."/>
            <person name="Minx P."/>
            <person name="Wagner-McPherson C."/>
            <person name="Layman D."/>
            <person name="Wylie K."/>
            <person name="Sekhon M."/>
            <person name="Becker M.C."/>
            <person name="Fewell G.A."/>
            <person name="Delehaunty K.D."/>
            <person name="Miner T.L."/>
            <person name="Nash W.E."/>
            <person name="Kremitzki C."/>
            <person name="Oddy L."/>
            <person name="Du H."/>
            <person name="Sun H."/>
            <person name="Bradshaw-Cordum H."/>
            <person name="Ali J."/>
            <person name="Carter J."/>
            <person name="Cordes M."/>
            <person name="Harris A."/>
            <person name="Isak A."/>
            <person name="van Brunt A."/>
            <person name="Nguyen C."/>
            <person name="Du F."/>
            <person name="Courtney L."/>
            <person name="Kalicki J."/>
            <person name="Ozersky P."/>
            <person name="Abbott S."/>
            <person name="Armstrong J."/>
            <person name="Belter E.A."/>
            <person name="Caruso L."/>
            <person name="Cedroni M."/>
            <person name="Cotton M."/>
            <person name="Davidson T."/>
            <person name="Desai A."/>
            <person name="Elliott G."/>
            <person name="Erb T."/>
            <person name="Fronick C."/>
            <person name="Gaige T."/>
            <person name="Haakenson W."/>
            <person name="Haglund K."/>
            <person name="Holmes A."/>
            <person name="Harkins R."/>
            <person name="Kim K."/>
            <person name="Kruchowski S.S."/>
            <person name="Strong C.M."/>
            <person name="Grewal N."/>
            <person name="Goyea E."/>
            <person name="Hou S."/>
            <person name="Levy A."/>
            <person name="Martinka S."/>
            <person name="Mead K."/>
            <person name="McLellan M.D."/>
            <person name="Meyer R."/>
            <person name="Randall-Maher J."/>
            <person name="Tomlinson C."/>
            <person name="Dauphin-Kohlberg S."/>
            <person name="Kozlowicz-Reilly A."/>
            <person name="Shah N."/>
            <person name="Swearengen-Shahid S."/>
            <person name="Snider J."/>
            <person name="Strong J.T."/>
            <person name="Thompson J."/>
            <person name="Yoakum M."/>
            <person name="Leonard S."/>
            <person name="Pearman C."/>
            <person name="Trani L."/>
            <person name="Radionenko M."/>
            <person name="Waligorski J.E."/>
            <person name="Wang C."/>
            <person name="Rock S.M."/>
            <person name="Tin-Wollam A.-M."/>
            <person name="Maupin R."/>
            <person name="Latreille P."/>
            <person name="Wendl M.C."/>
            <person name="Yang S.-P."/>
            <person name="Pohl C."/>
            <person name="Wallis J.W."/>
            <person name="Spieth J."/>
            <person name="Bieri T.A."/>
            <person name="Berkowicz N."/>
            <person name="Nelson J.O."/>
            <person name="Osborne J."/>
            <person name="Ding L."/>
            <person name="Meyer R."/>
            <person name="Sabo A."/>
            <person name="Shotland Y."/>
            <person name="Sinha P."/>
            <person name="Wohldmann P.E."/>
            <person name="Cook L.L."/>
            <person name="Hickenbotham M.T."/>
            <person name="Eldred J."/>
            <person name="Williams D."/>
            <person name="Jones T.A."/>
            <person name="She X."/>
            <person name="Ciccarelli F.D."/>
            <person name="Izaurralde E."/>
            <person name="Taylor J."/>
            <person name="Schmutz J."/>
            <person name="Myers R.M."/>
            <person name="Cox D.R."/>
            <person name="Huang X."/>
            <person name="McPherson J.D."/>
            <person name="Mardis E.R."/>
            <person name="Clifton S.W."/>
            <person name="Warren W.C."/>
            <person name="Chinwalla A.T."/>
            <person name="Eddy S.R."/>
            <person name="Marra M.A."/>
            <person name="Ovcharenko I."/>
            <person name="Furey T.S."/>
            <person name="Miller W."/>
            <person name="Eichler E.E."/>
            <person name="Bork P."/>
            <person name="Suyama M."/>
            <person name="Torrents D."/>
            <person name="Waterston R.H."/>
            <person name="Wilson R.K."/>
        </authorList>
    </citation>
    <scope>NUCLEOTIDE SEQUENCE [LARGE SCALE GENOMIC DNA]</scope>
</reference>
<reference key="3">
    <citation type="journal article" date="2004" name="Genome Res.">
        <title>The status, quality, and expansion of the NIH full-length cDNA project: the Mammalian Gene Collection (MGC).</title>
        <authorList>
            <consortium name="The MGC Project Team"/>
        </authorList>
    </citation>
    <scope>NUCLEOTIDE SEQUENCE [LARGE SCALE MRNA] (ISOFORM 1)</scope>
    <scope>VARIANT ARG-126</scope>
    <source>
        <tissue>Placenta</tissue>
    </source>
</reference>
<reference key="4">
    <citation type="journal article" date="2009" name="Am. J. Hum. Genet.">
        <title>Mutations in CNNM4 cause recessive cone-rod dystrophy with amelogenesis imperfecta.</title>
        <authorList>
            <person name="Polok B."/>
            <person name="Escher P."/>
            <person name="Ambresin A."/>
            <person name="Chouery E."/>
            <person name="Bolay S."/>
            <person name="Meunier I."/>
            <person name="Nan F."/>
            <person name="Hamel C."/>
            <person name="Munier F.L."/>
            <person name="Thilo B."/>
            <person name="Megarbane A."/>
            <person name="Schorderet D.F."/>
        </authorList>
    </citation>
    <scope>NUCLEOTIDE SEQUENCE [GENOMIC DNA] OF 1-467</scope>
    <scope>VARIANTS JALIS GLN-236 AND PRO-324</scope>
    <scope>FUNCTION</scope>
</reference>
<reference key="5">
    <citation type="journal article" date="2003" name="Gene">
        <title>Molecular cloning and characterization of a novel gene family of four ancient conserved domain proteins (ACDP).</title>
        <authorList>
            <person name="Wang C.-Y."/>
            <person name="Shi J.-D."/>
            <person name="Yang P."/>
            <person name="Kumar P.G."/>
            <person name="Li Q.-Z."/>
            <person name="Run Q.-G."/>
            <person name="Su Y.-C."/>
            <person name="Scott H.S."/>
            <person name="Kao K.-J."/>
            <person name="She J.-X."/>
        </authorList>
    </citation>
    <scope>NUCLEOTIDE SEQUENCE [MRNA] OF 49-775 (ISOFORM 1)</scope>
    <scope>TISSUE SPECIFICITY</scope>
    <source>
        <tissue>Brain</tissue>
    </source>
</reference>
<reference key="6">
    <citation type="journal article" date="2000" name="DNA Res.">
        <title>Prediction of the coding sequences of unidentified human genes. XVIII. The complete sequences of 100 new cDNA clones from brain which code for large proteins in vitro.</title>
        <authorList>
            <person name="Nagase T."/>
            <person name="Kikuno R."/>
            <person name="Nakayama M."/>
            <person name="Hirosawa M."/>
            <person name="Ohara O."/>
        </authorList>
    </citation>
    <scope>NUCLEOTIDE SEQUENCE [LARGE SCALE MRNA] OF 59-775 (ISOFORM 1)</scope>
</reference>
<reference key="7">
    <citation type="journal article" date="2005" name="Mol. Pain">
        <title>Physical interaction and functional coupling between ACDP4 and the intracellular ion chaperone COX11, an implication of the role of ACDP4 in essential metal ion transport and homeostasis.</title>
        <authorList>
            <person name="Guo D."/>
            <person name="Ling J."/>
            <person name="Wang M.-H."/>
            <person name="She J.-X."/>
            <person name="Gu J."/>
            <person name="Wang C.-Y."/>
        </authorList>
    </citation>
    <scope>INTERACTION WITH COX11</scope>
</reference>
<reference key="8">
    <citation type="journal article" date="2012" name="J. Biol. Chem.">
        <title>Membrane topology and intracellular processing of Cyclin M2 (CNNM2).</title>
        <authorList>
            <person name="de Baaij J.H."/>
            <person name="Stuiver M."/>
            <person name="Meij I.C."/>
            <person name="Lainez S."/>
            <person name="Kopplin K."/>
            <person name="Venselaar H."/>
            <person name="Mueller D."/>
            <person name="Bindels R.J."/>
            <person name="Hoenderop J.G."/>
        </authorList>
    </citation>
    <scope>SUBCELLULAR LOCATION</scope>
    <scope>MEMBRANE TOPOLOGY</scope>
</reference>
<reference key="9">
    <citation type="journal article" date="2013" name="J. Proteome Res.">
        <title>Toward a comprehensive characterization of a human cancer cell phosphoproteome.</title>
        <authorList>
            <person name="Zhou H."/>
            <person name="Di Palma S."/>
            <person name="Preisinger C."/>
            <person name="Peng M."/>
            <person name="Polat A.N."/>
            <person name="Heck A.J."/>
            <person name="Mohammed S."/>
        </authorList>
    </citation>
    <scope>PHOSPHORYLATION [LARGE SCALE ANALYSIS] AT SER-660 AND SER-664</scope>
    <scope>IDENTIFICATION BY MASS SPECTROMETRY [LARGE SCALE ANALYSIS]</scope>
    <source>
        <tissue>Cervix carcinoma</tissue>
        <tissue>Erythroleukemia</tissue>
    </source>
</reference>
<reference key="10">
    <citation type="journal article" date="2006" name="Science">
        <title>The consensus coding sequences of human breast and colorectal cancers.</title>
        <authorList>
            <person name="Sjoeblom T."/>
            <person name="Jones S."/>
            <person name="Wood L.D."/>
            <person name="Parsons D.W."/>
            <person name="Lin J."/>
            <person name="Barber T.D."/>
            <person name="Mandelker D."/>
            <person name="Leary R.J."/>
            <person name="Ptak J."/>
            <person name="Silliman N."/>
            <person name="Szabo S."/>
            <person name="Buckhaults P."/>
            <person name="Farrell C."/>
            <person name="Meeh P."/>
            <person name="Markowitz S.D."/>
            <person name="Willis J."/>
            <person name="Dawson D."/>
            <person name="Willson J.K.V."/>
            <person name="Gazdar A.F."/>
            <person name="Hartigan J."/>
            <person name="Wu L."/>
            <person name="Liu C."/>
            <person name="Parmigiani G."/>
            <person name="Park B.H."/>
            <person name="Bachman K.E."/>
            <person name="Papadopoulos N."/>
            <person name="Vogelstein B."/>
            <person name="Kinzler K.W."/>
            <person name="Velculescu V.E."/>
        </authorList>
    </citation>
    <scope>VARIANT [LARGE SCALE ANALYSIS] LEU-134</scope>
</reference>
<reference key="11">
    <citation type="journal article" date="2009" name="Am. J. Hum. Genet.">
        <title>Mutations in CNNM4 cause Jalili syndrome, consisting of autosomal-recessive cone-rod dystrophy and amelogenesis imperfecta.</title>
        <authorList>
            <person name="Parry D.A."/>
            <person name="Mighell A.J."/>
            <person name="El-Sayed W."/>
            <person name="Shore R.C."/>
            <person name="Jalili I.K."/>
            <person name="Dollfus H."/>
            <person name="Bloch-Zupan A."/>
            <person name="Carlos R."/>
            <person name="Carr I.M."/>
            <person name="Downey L.M."/>
            <person name="Blain K.M."/>
            <person name="Mansfield D.C."/>
            <person name="Shahrabi M."/>
            <person name="Heidari M."/>
            <person name="Aref P."/>
            <person name="Abbasi M."/>
            <person name="Michaelides M."/>
            <person name="Moore A.T."/>
            <person name="Kirkham J."/>
            <person name="Inglehearn C.F."/>
        </authorList>
    </citation>
    <scope>VARIANTS JALIS PRO-196; TYR-200 AND PRO-324</scope>
    <scope>FUNCTION</scope>
</reference>